<evidence type="ECO:0000255" key="1">
    <source>
        <dbReference type="HAMAP-Rule" id="MF_01368"/>
    </source>
</evidence>
<evidence type="ECO:0000305" key="2"/>
<proteinExistence type="inferred from homology"/>
<sequence>MAYRKLGRTSSQRKAMLRDLTTDLLINESIVTTEARAKEIRKTVEKMITLGKRGDLHARRQAAAYVRNEIASENYDEATDKYTSTTALQKLFSEIAPRYAERNGGYTRILKTEPRRGDAAPMAIIELV</sequence>
<reference key="1">
    <citation type="journal article" date="2002" name="Proc. Natl. Acad. Sci. U.S.A.">
        <title>Genome sequence of a serotype M3 strain of group A Streptococcus: phage-encoded toxins, the high-virulence phenotype, and clone emergence.</title>
        <authorList>
            <person name="Beres S.B."/>
            <person name="Sylva G.L."/>
            <person name="Barbian K.D."/>
            <person name="Lei B."/>
            <person name="Hoff J.S."/>
            <person name="Mammarella N.D."/>
            <person name="Liu M.-Y."/>
            <person name="Smoot J.C."/>
            <person name="Porcella S.F."/>
            <person name="Parkins L.D."/>
            <person name="Campbell D.S."/>
            <person name="Smith T.M."/>
            <person name="McCormick J.K."/>
            <person name="Leung D.Y.M."/>
            <person name="Schlievert P.M."/>
            <person name="Musser J.M."/>
        </authorList>
    </citation>
    <scope>NUCLEOTIDE SEQUENCE [LARGE SCALE GENOMIC DNA]</scope>
    <source>
        <strain>ATCC BAA-595 / MGAS315</strain>
    </source>
</reference>
<organism>
    <name type="scientific">Streptococcus pyogenes serotype M3 (strain ATCC BAA-595 / MGAS315)</name>
    <dbReference type="NCBI Taxonomy" id="198466"/>
    <lineage>
        <taxon>Bacteria</taxon>
        <taxon>Bacillati</taxon>
        <taxon>Bacillota</taxon>
        <taxon>Bacilli</taxon>
        <taxon>Lactobacillales</taxon>
        <taxon>Streptococcaceae</taxon>
        <taxon>Streptococcus</taxon>
    </lineage>
</organism>
<dbReference type="EMBL" id="AE014074">
    <property type="protein sequence ID" value="AAM78674.1"/>
    <property type="molecule type" value="Genomic_DNA"/>
</dbReference>
<dbReference type="RefSeq" id="WP_002986602.1">
    <property type="nucleotide sequence ID" value="NC_004070.1"/>
</dbReference>
<dbReference type="SMR" id="P0DE10"/>
<dbReference type="GeneID" id="83703931"/>
<dbReference type="KEGG" id="spg:SpyM3_0067"/>
<dbReference type="HOGENOM" id="CLU_074407_2_2_9"/>
<dbReference type="Proteomes" id="UP000000564">
    <property type="component" value="Chromosome"/>
</dbReference>
<dbReference type="GO" id="GO:0022625">
    <property type="term" value="C:cytosolic large ribosomal subunit"/>
    <property type="evidence" value="ECO:0007669"/>
    <property type="project" value="TreeGrafter"/>
</dbReference>
<dbReference type="GO" id="GO:0003735">
    <property type="term" value="F:structural constituent of ribosome"/>
    <property type="evidence" value="ECO:0007669"/>
    <property type="project" value="InterPro"/>
</dbReference>
<dbReference type="GO" id="GO:0006412">
    <property type="term" value="P:translation"/>
    <property type="evidence" value="ECO:0007669"/>
    <property type="project" value="UniProtKB-UniRule"/>
</dbReference>
<dbReference type="FunFam" id="3.90.1030.10:FF:000002">
    <property type="entry name" value="50S ribosomal protein L17"/>
    <property type="match status" value="1"/>
</dbReference>
<dbReference type="Gene3D" id="3.90.1030.10">
    <property type="entry name" value="Ribosomal protein L17"/>
    <property type="match status" value="1"/>
</dbReference>
<dbReference type="HAMAP" id="MF_01368">
    <property type="entry name" value="Ribosomal_bL17"/>
    <property type="match status" value="1"/>
</dbReference>
<dbReference type="InterPro" id="IPR000456">
    <property type="entry name" value="Ribosomal_bL17"/>
</dbReference>
<dbReference type="InterPro" id="IPR047859">
    <property type="entry name" value="Ribosomal_bL17_CS"/>
</dbReference>
<dbReference type="InterPro" id="IPR036373">
    <property type="entry name" value="Ribosomal_bL17_sf"/>
</dbReference>
<dbReference type="NCBIfam" id="TIGR00059">
    <property type="entry name" value="L17"/>
    <property type="match status" value="1"/>
</dbReference>
<dbReference type="PANTHER" id="PTHR14413:SF16">
    <property type="entry name" value="LARGE RIBOSOMAL SUBUNIT PROTEIN BL17M"/>
    <property type="match status" value="1"/>
</dbReference>
<dbReference type="PANTHER" id="PTHR14413">
    <property type="entry name" value="RIBOSOMAL PROTEIN L17"/>
    <property type="match status" value="1"/>
</dbReference>
<dbReference type="Pfam" id="PF01196">
    <property type="entry name" value="Ribosomal_L17"/>
    <property type="match status" value="1"/>
</dbReference>
<dbReference type="SUPFAM" id="SSF64263">
    <property type="entry name" value="Prokaryotic ribosomal protein L17"/>
    <property type="match status" value="1"/>
</dbReference>
<dbReference type="PROSITE" id="PS01167">
    <property type="entry name" value="RIBOSOMAL_L17"/>
    <property type="match status" value="1"/>
</dbReference>
<name>RL17_STRP3</name>
<feature type="chain" id="PRO_1000055958" description="Large ribosomal subunit protein bL17">
    <location>
        <begin position="1"/>
        <end position="128"/>
    </location>
</feature>
<keyword id="KW-0687">Ribonucleoprotein</keyword>
<keyword id="KW-0689">Ribosomal protein</keyword>
<comment type="subunit">
    <text evidence="1">Part of the 50S ribosomal subunit. Contacts protein L32.</text>
</comment>
<comment type="similarity">
    <text evidence="1">Belongs to the bacterial ribosomal protein bL17 family.</text>
</comment>
<gene>
    <name evidence="1" type="primary">rplQ</name>
    <name type="ordered locus">SpyM3_0067</name>
</gene>
<accession>P0DE10</accession>
<accession>Q7CFK2</accession>
<accession>Q8P2Z2</accession>
<protein>
    <recommendedName>
        <fullName evidence="1">Large ribosomal subunit protein bL17</fullName>
    </recommendedName>
    <alternativeName>
        <fullName evidence="2">50S ribosomal protein L17</fullName>
    </alternativeName>
</protein>